<sequence>MDGWSEVLRIPSSVFATDNYNNPTTIVNITSLQFDSVQNFIWCGDSRGYTRSFTGSFATNSLYGNLQLYPYTKFHTSDVNYNNPIKQILSHREGILSLSNNAISFNSRRGLSKLQVTSKTFNNNATTENKFNNLQAMTFNCNSFNDVVVGTDTSMMKFDLNKPNVLSSFDHQGGISLLNNLGKFLTIANSNGSLDIFDPVSNSTMKTFSAHNGFISNLDVRGNYIATCGYSIKPKRYYHNQPAEYIVDPLVNIYDTRIMRAIAPVPFPAGAASVKFHPKLPNIIIIASTSGQMQFVDIFDQTNVYLYQADLAIPTTTTTTINNKPRMSNLEISENGDFLVFNDNCDNMHLWSISPSSKDFVNFPQPVEQPDIIDSNFEIIDIDANVPLSIVGMPYYKELLLSNYPNDLRFVKETAKLPEPIDIELILENETRNNGTKKFFPYDKLKYGPGNVYKPYQSLKDNKENKEISIPKFISERSTTTTTTTKELKADNDGKFIDDSIFQYKFQGKLNKVPNCYSRLQIQYSKFGIKDFDFSYYNKTKECCGLENHTDNSYINSLLQLYRFQSSIYNQVVGSLSKEWLPNDITTIITTNNPEGSSILNELGYLFDMMFKAQSNNVKIYNLSQVLNHHPNAQKLLNNNELLNLNSQQVRDLVIEFNNFLLTTLHQDFQTQFQENFNLTELKYEIEIKGNGTSCPMYDKHQGSMFSLELITPPSNMLNKMSILINNNNNNNNPQYQPEPISSLDNIRRNLNILTYLEYSMNQYKTIPCQQHNHSYPHNLEIQTSIVHLPSVLTINVNLSNPEFKIINNFTQWLVPEFYAVKSKSISGKNGYSFKEIDHPTPNSATQESGKYKYKYELLGYVCEINHQSDIVSGAHNLVAFIKVNNNGGWYLFNDFLVMPIPEEEVFDLQPSWKKPIVIMYQQTNQPSFNYLTTTTTTTTTTTTFSNAGKYDDSILYRDHFAEGIRKGHQLEYELLTRKESPQPGSLVAIDAEFVMLKPEELEIHYDGYKKLIKPKQLSLARISVLRENGIPFIDDYIVHTSDIYDYLTNFSGIEPNDLNLTLSNRENLVTLQTAYRKLWLLLNLGVIFVGHGLYNDFRTINLQVPERQIRDTAVIYYKSDFKRQLSLKFLAYVMLKEKVQSGNHDSIEDANTALLLYKKYQNLYNKEDFESILNYIYSEGQQLRFKVPE</sequence>
<organism>
    <name type="scientific">Candida albicans (strain SC5314 / ATCC MYA-2876)</name>
    <name type="common">Yeast</name>
    <dbReference type="NCBI Taxonomy" id="237561"/>
    <lineage>
        <taxon>Eukaryota</taxon>
        <taxon>Fungi</taxon>
        <taxon>Dikarya</taxon>
        <taxon>Ascomycota</taxon>
        <taxon>Saccharomycotina</taxon>
        <taxon>Pichiomycetes</taxon>
        <taxon>Debaryomycetaceae</taxon>
        <taxon>Candida/Lodderomyces clade</taxon>
        <taxon>Candida</taxon>
    </lineage>
</organism>
<keyword id="KW-0963">Cytoplasm</keyword>
<keyword id="KW-0269">Exonuclease</keyword>
<keyword id="KW-0378">Hydrolase</keyword>
<keyword id="KW-0479">Metal-binding</keyword>
<keyword id="KW-0507">mRNA processing</keyword>
<keyword id="KW-0540">Nuclease</keyword>
<keyword id="KW-1185">Reference proteome</keyword>
<keyword id="KW-0677">Repeat</keyword>
<keyword id="KW-0853">WD repeat</keyword>
<proteinExistence type="inferred from homology"/>
<reference key="1">
    <citation type="journal article" date="2004" name="Proc. Natl. Acad. Sci. U.S.A.">
        <title>The diploid genome sequence of Candida albicans.</title>
        <authorList>
            <person name="Jones T."/>
            <person name="Federspiel N.A."/>
            <person name="Chibana H."/>
            <person name="Dungan J."/>
            <person name="Kalman S."/>
            <person name="Magee B.B."/>
            <person name="Newport G."/>
            <person name="Thorstenson Y.R."/>
            <person name="Agabian N."/>
            <person name="Magee P.T."/>
            <person name="Davis R.W."/>
            <person name="Scherer S."/>
        </authorList>
    </citation>
    <scope>NUCLEOTIDE SEQUENCE [LARGE SCALE GENOMIC DNA]</scope>
    <source>
        <strain>SC5314 / ATCC MYA-2876</strain>
    </source>
</reference>
<reference key="2">
    <citation type="journal article" date="2007" name="Genome Biol.">
        <title>Assembly of the Candida albicans genome into sixteen supercontigs aligned on the eight chromosomes.</title>
        <authorList>
            <person name="van het Hoog M."/>
            <person name="Rast T.J."/>
            <person name="Martchenko M."/>
            <person name="Grindle S."/>
            <person name="Dignard D."/>
            <person name="Hogues H."/>
            <person name="Cuomo C."/>
            <person name="Berriman M."/>
            <person name="Scherer S."/>
            <person name="Magee B.B."/>
            <person name="Whiteway M."/>
            <person name="Chibana H."/>
            <person name="Nantel A."/>
            <person name="Magee P.T."/>
        </authorList>
    </citation>
    <scope>GENOME REANNOTATION</scope>
    <source>
        <strain>SC5314 / ATCC MYA-2876</strain>
    </source>
</reference>
<reference key="3">
    <citation type="journal article" date="2013" name="Genome Biol.">
        <title>Assembly of a phased diploid Candida albicans genome facilitates allele-specific measurements and provides a simple model for repeat and indel structure.</title>
        <authorList>
            <person name="Muzzey D."/>
            <person name="Schwartz K."/>
            <person name="Weissman J.S."/>
            <person name="Sherlock G."/>
        </authorList>
    </citation>
    <scope>NUCLEOTIDE SEQUENCE [LARGE SCALE GENOMIC DNA]</scope>
    <scope>GENOME REANNOTATION</scope>
    <source>
        <strain>SC5314 / ATCC MYA-2876</strain>
    </source>
</reference>
<dbReference type="EC" id="3.1.13.4" evidence="1"/>
<dbReference type="EMBL" id="CP017623">
    <property type="protein sequence ID" value="AOW26541.1"/>
    <property type="molecule type" value="Genomic_DNA"/>
</dbReference>
<dbReference type="RefSeq" id="XP_723450.2">
    <property type="nucleotide sequence ID" value="XM_718357.2"/>
</dbReference>
<dbReference type="SMR" id="Q5APK0"/>
<dbReference type="FunCoup" id="Q5APK0">
    <property type="interactions" value="722"/>
</dbReference>
<dbReference type="STRING" id="237561.Q5APK0"/>
<dbReference type="EnsemblFungi" id="C1_09070W_A-T">
    <property type="protein sequence ID" value="C1_09070W_A-T-p1"/>
    <property type="gene ID" value="C1_09070W_A"/>
</dbReference>
<dbReference type="GeneID" id="3634773"/>
<dbReference type="KEGG" id="cal:CAALFM_C109070WA"/>
<dbReference type="CGD" id="CAL0000194881">
    <property type="gene designation" value="orf19.12228"/>
</dbReference>
<dbReference type="VEuPathDB" id="FungiDB:C1_09070W_A"/>
<dbReference type="HOGENOM" id="CLU_002369_1_0_1"/>
<dbReference type="InParanoid" id="Q5APK0"/>
<dbReference type="OrthoDB" id="16516at2759"/>
<dbReference type="PRO" id="PR:Q5APK0"/>
<dbReference type="Proteomes" id="UP000000559">
    <property type="component" value="Chromosome 1"/>
</dbReference>
<dbReference type="GO" id="GO:0000932">
    <property type="term" value="C:P-body"/>
    <property type="evidence" value="ECO:0000318"/>
    <property type="project" value="GO_Central"/>
</dbReference>
<dbReference type="GO" id="GO:0031251">
    <property type="term" value="C:PAN complex"/>
    <property type="evidence" value="ECO:0000318"/>
    <property type="project" value="GO_Central"/>
</dbReference>
<dbReference type="GO" id="GO:0046872">
    <property type="term" value="F:metal ion binding"/>
    <property type="evidence" value="ECO:0007669"/>
    <property type="project" value="UniProtKB-KW"/>
</dbReference>
<dbReference type="GO" id="GO:0003676">
    <property type="term" value="F:nucleic acid binding"/>
    <property type="evidence" value="ECO:0007669"/>
    <property type="project" value="InterPro"/>
</dbReference>
<dbReference type="GO" id="GO:0004535">
    <property type="term" value="F:poly(A)-specific ribonuclease activity"/>
    <property type="evidence" value="ECO:0007669"/>
    <property type="project" value="UniProtKB-UniRule"/>
</dbReference>
<dbReference type="GO" id="GO:0006397">
    <property type="term" value="P:mRNA processing"/>
    <property type="evidence" value="ECO:0007669"/>
    <property type="project" value="UniProtKB-KW"/>
</dbReference>
<dbReference type="GO" id="GO:0000289">
    <property type="term" value="P:nuclear-transcribed mRNA poly(A) tail shortening"/>
    <property type="evidence" value="ECO:0000318"/>
    <property type="project" value="GO_Central"/>
</dbReference>
<dbReference type="CDD" id="cd06143">
    <property type="entry name" value="PAN2_exo"/>
    <property type="match status" value="1"/>
</dbReference>
<dbReference type="CDD" id="cd02672">
    <property type="entry name" value="Peptidase_C19P"/>
    <property type="match status" value="1"/>
</dbReference>
<dbReference type="FunFam" id="2.130.10.10:FF:003290">
    <property type="entry name" value="PAN2-PAN3 deadenylation complex catalytic subunit PAN2"/>
    <property type="match status" value="1"/>
</dbReference>
<dbReference type="FunFam" id="3.30.420.10:FF:000028">
    <property type="entry name" value="PAN2-PAN3 deadenylation complex catalytic subunit PAN2"/>
    <property type="match status" value="1"/>
</dbReference>
<dbReference type="Gene3D" id="3.90.70.10">
    <property type="entry name" value="Cysteine proteinases"/>
    <property type="match status" value="1"/>
</dbReference>
<dbReference type="Gene3D" id="3.30.420.10">
    <property type="entry name" value="Ribonuclease H-like superfamily/Ribonuclease H"/>
    <property type="match status" value="1"/>
</dbReference>
<dbReference type="Gene3D" id="2.130.10.10">
    <property type="entry name" value="YVTN repeat-like/Quinoprotein amine dehydrogenase"/>
    <property type="match status" value="1"/>
</dbReference>
<dbReference type="HAMAP" id="MF_03182">
    <property type="entry name" value="PAN2"/>
    <property type="match status" value="1"/>
</dbReference>
<dbReference type="InterPro" id="IPR013520">
    <property type="entry name" value="Exonuclease_RNaseT/DNA_pol3"/>
</dbReference>
<dbReference type="InterPro" id="IPR030843">
    <property type="entry name" value="PAN2"/>
</dbReference>
<dbReference type="InterPro" id="IPR050785">
    <property type="entry name" value="PAN2-PAN3_catalytic_subunit"/>
</dbReference>
<dbReference type="InterPro" id="IPR048841">
    <property type="entry name" value="PAN2_N"/>
</dbReference>
<dbReference type="InterPro" id="IPR028881">
    <property type="entry name" value="PAN2_UCH_dom"/>
</dbReference>
<dbReference type="InterPro" id="IPR038765">
    <property type="entry name" value="Papain-like_cys_pep_sf"/>
</dbReference>
<dbReference type="InterPro" id="IPR012337">
    <property type="entry name" value="RNaseH-like_sf"/>
</dbReference>
<dbReference type="InterPro" id="IPR036397">
    <property type="entry name" value="RNaseH_sf"/>
</dbReference>
<dbReference type="InterPro" id="IPR028889">
    <property type="entry name" value="USP_dom"/>
</dbReference>
<dbReference type="InterPro" id="IPR015943">
    <property type="entry name" value="WD40/YVTN_repeat-like_dom_sf"/>
</dbReference>
<dbReference type="InterPro" id="IPR036322">
    <property type="entry name" value="WD40_repeat_dom_sf"/>
</dbReference>
<dbReference type="PANTHER" id="PTHR15728">
    <property type="entry name" value="DEADENYLATION COMPLEX CATALYTIC SUBUNIT PAN2"/>
    <property type="match status" value="1"/>
</dbReference>
<dbReference type="PANTHER" id="PTHR15728:SF0">
    <property type="entry name" value="PAN2-PAN3 DEADENYLATION COMPLEX CATALYTIC SUBUNIT PAN2"/>
    <property type="match status" value="1"/>
</dbReference>
<dbReference type="Pfam" id="PF20770">
    <property type="entry name" value="PAN2_N"/>
    <property type="match status" value="1"/>
</dbReference>
<dbReference type="Pfam" id="PF00929">
    <property type="entry name" value="RNase_T"/>
    <property type="match status" value="1"/>
</dbReference>
<dbReference type="Pfam" id="PF13423">
    <property type="entry name" value="UCH_1"/>
    <property type="match status" value="1"/>
</dbReference>
<dbReference type="SMART" id="SM00479">
    <property type="entry name" value="EXOIII"/>
    <property type="match status" value="1"/>
</dbReference>
<dbReference type="SUPFAM" id="SSF54001">
    <property type="entry name" value="Cysteine proteinases"/>
    <property type="match status" value="1"/>
</dbReference>
<dbReference type="SUPFAM" id="SSF53098">
    <property type="entry name" value="Ribonuclease H-like"/>
    <property type="match status" value="1"/>
</dbReference>
<dbReference type="SUPFAM" id="SSF50978">
    <property type="entry name" value="WD40 repeat-like"/>
    <property type="match status" value="1"/>
</dbReference>
<dbReference type="PROSITE" id="PS50235">
    <property type="entry name" value="USP_3"/>
    <property type="match status" value="1"/>
</dbReference>
<evidence type="ECO:0000255" key="1">
    <source>
        <dbReference type="HAMAP-Rule" id="MF_03182"/>
    </source>
</evidence>
<protein>
    <recommendedName>
        <fullName evidence="1">PAN2-PAN3 deadenylation complex catalytic subunit PAN2</fullName>
        <ecNumber evidence="1">3.1.13.4</ecNumber>
    </recommendedName>
    <alternativeName>
        <fullName evidence="1">PAB1P-dependent poly(A)-specific ribonuclease</fullName>
    </alternativeName>
    <alternativeName>
        <fullName evidence="1">Poly(A)-nuclease deadenylation complex subunit 2</fullName>
        <shortName evidence="1">PAN deadenylation complex subunit 2</shortName>
    </alternativeName>
</protein>
<feature type="chain" id="PRO_0000295340" description="PAN2-PAN3 deadenylation complex catalytic subunit PAN2">
    <location>
        <begin position="1"/>
        <end position="1190"/>
    </location>
</feature>
<feature type="repeat" description="WD 1" evidence="1">
    <location>
        <begin position="24"/>
        <end position="63"/>
    </location>
</feature>
<feature type="repeat" description="WD 2" evidence="1">
    <location>
        <begin position="129"/>
        <end position="166"/>
    </location>
</feature>
<feature type="repeat" description="WD 3" evidence="1">
    <location>
        <begin position="167"/>
        <end position="207"/>
    </location>
</feature>
<feature type="repeat" description="WD 4" evidence="1">
    <location>
        <begin position="222"/>
        <end position="264"/>
    </location>
</feature>
<feature type="repeat" description="WD 5" evidence="1">
    <location>
        <begin position="266"/>
        <end position="306"/>
    </location>
</feature>
<feature type="repeat" description="WD 6" evidence="1">
    <location>
        <begin position="322"/>
        <end position="361"/>
    </location>
</feature>
<feature type="domain" description="USP" evidence="1">
    <location>
        <begin position="512"/>
        <end position="924"/>
    </location>
</feature>
<feature type="domain" description="Exonuclease" evidence="1">
    <location>
        <begin position="988"/>
        <end position="1158"/>
    </location>
</feature>
<feature type="region of interest" description="Linker" evidence="1">
    <location>
        <begin position="364"/>
        <end position="511"/>
    </location>
</feature>
<feature type="binding site" evidence="1">
    <location>
        <position position="991"/>
    </location>
    <ligand>
        <name>a divalent metal cation</name>
        <dbReference type="ChEBI" id="CHEBI:60240"/>
        <note>catalytic</note>
    </ligand>
</feature>
<feature type="binding site" evidence="1">
    <location>
        <position position="993"/>
    </location>
    <ligand>
        <name>a divalent metal cation</name>
        <dbReference type="ChEBI" id="CHEBI:60240"/>
        <note>catalytic</note>
    </ligand>
</feature>
<feature type="binding site" evidence="1">
    <location>
        <position position="1097"/>
    </location>
    <ligand>
        <name>a divalent metal cation</name>
        <dbReference type="ChEBI" id="CHEBI:60240"/>
        <note>catalytic</note>
    </ligand>
</feature>
<feature type="binding site" evidence="1">
    <location>
        <position position="1150"/>
    </location>
    <ligand>
        <name>a divalent metal cation</name>
        <dbReference type="ChEBI" id="CHEBI:60240"/>
        <note>catalytic</note>
    </ligand>
</feature>
<comment type="function">
    <text evidence="1">Catalytic subunit of the poly(A)-nuclease (PAN) deadenylation complex, one of two cytoplasmic mRNA deadenylases involved in mRNA turnover. PAN specifically shortens poly(A) tails of RNA and the activity is stimulated by poly(A)-binding protein PAB1. PAN deadenylation is followed by rapid degradation of the shortened mRNA tails by the CCR4-NOT complex. Deadenylated mRNAs are then degraded by two alternative mechanisms, namely exosome-mediated 3'-5' exonucleolytic degradation, or deadenylation-dependent mRNA decaping and subsequent 5'-3' exonucleolytic degradation by XRN1. May also be involved in post-transcriptional maturation of mRNA poly(A) tails.</text>
</comment>
<comment type="catalytic activity">
    <reaction evidence="1">
        <text>Exonucleolytic cleavage of poly(A) to 5'-AMP.</text>
        <dbReference type="EC" id="3.1.13.4"/>
    </reaction>
</comment>
<comment type="cofactor">
    <cofactor evidence="1">
        <name>a divalent metal cation</name>
        <dbReference type="ChEBI" id="CHEBI:60240"/>
    </cofactor>
    <text evidence="1">Binds 2 metal cations per subunit in the catalytic exonuclease domain.</text>
</comment>
<comment type="activity regulation">
    <text evidence="1">Positively regulated by the regulatory subunit PAN3.</text>
</comment>
<comment type="subunit">
    <text evidence="1">Forms a heterotrimer with an asymmetric homodimer of the regulatory subunit PAN3 to form the poly(A)-nuclease (PAN) deadenylation complex.</text>
</comment>
<comment type="subcellular location">
    <subcellularLocation>
        <location evidence="1">Cytoplasm</location>
    </subcellularLocation>
</comment>
<comment type="domain">
    <text evidence="1">Contains a pseudo-UCH domain. This ubiquitin C-terminal hydrolase (UCH)-like or ubiquitin specific protease (USP)-like domain is predicted to be catalytically inactive because it lacks the active site catalytic triad characteristic of thiol proteases, with residues at the equivalent structural positions that are incompatible with catalysis, and it cannot bind ubiquitin. It functions as a structural scaffold for intra- and intermolecular interactions in the complex.</text>
</comment>
<comment type="domain">
    <text evidence="1">The linker, or PAN3 interaction domain (PID), between the WD40 repeats and the pseudo-UCH domain mediates interaction with PAN3.</text>
</comment>
<comment type="similarity">
    <text evidence="1">Belongs to the peptidase C19 family. PAN2 subfamily.</text>
</comment>
<accession>Q5APK0</accession>
<accession>A0A1D8PEH7</accession>
<gene>
    <name evidence="1" type="primary">PAN2</name>
    <name type="ordered locus">CAALFM_C109070WA</name>
    <name type="ORF">CaO19.12228</name>
    <name type="ORF">CaO19.4764</name>
</gene>
<name>PAN2_CANAL</name>